<evidence type="ECO:0000255" key="1">
    <source>
        <dbReference type="HAMAP-Rule" id="MF_00298"/>
    </source>
</evidence>
<gene>
    <name evidence="1" type="primary">rppH</name>
    <name evidence="1" type="synonym">nudH</name>
    <name type="ordered locus">lpp2931</name>
</gene>
<dbReference type="EC" id="3.6.1.-" evidence="1"/>
<dbReference type="EMBL" id="CR628336">
    <property type="protein sequence ID" value="CAH14084.1"/>
    <property type="molecule type" value="Genomic_DNA"/>
</dbReference>
<dbReference type="RefSeq" id="WP_010948558.1">
    <property type="nucleotide sequence ID" value="NC_006368.1"/>
</dbReference>
<dbReference type="SMR" id="Q5X115"/>
<dbReference type="KEGG" id="lpp:lpp2931"/>
<dbReference type="LegioList" id="lpp2931"/>
<dbReference type="HOGENOM" id="CLU_087195_3_1_6"/>
<dbReference type="GO" id="GO:0016462">
    <property type="term" value="F:pyrophosphatase activity"/>
    <property type="evidence" value="ECO:0007669"/>
    <property type="project" value="UniProtKB-ARBA"/>
</dbReference>
<dbReference type="CDD" id="cd03671">
    <property type="entry name" value="NUDIX_Ap4A_hydrolase_plant_like"/>
    <property type="match status" value="1"/>
</dbReference>
<dbReference type="Gene3D" id="3.90.79.10">
    <property type="entry name" value="Nucleoside Triphosphate Pyrophosphohydrolase"/>
    <property type="match status" value="1"/>
</dbReference>
<dbReference type="HAMAP" id="MF_00298">
    <property type="entry name" value="Nudix_RppH"/>
    <property type="match status" value="1"/>
</dbReference>
<dbReference type="InterPro" id="IPR020476">
    <property type="entry name" value="Nudix_hydrolase"/>
</dbReference>
<dbReference type="InterPro" id="IPR015797">
    <property type="entry name" value="NUDIX_hydrolase-like_dom_sf"/>
</dbReference>
<dbReference type="InterPro" id="IPR020084">
    <property type="entry name" value="NUDIX_hydrolase_CS"/>
</dbReference>
<dbReference type="InterPro" id="IPR000086">
    <property type="entry name" value="NUDIX_hydrolase_dom"/>
</dbReference>
<dbReference type="InterPro" id="IPR022927">
    <property type="entry name" value="RppH"/>
</dbReference>
<dbReference type="NCBIfam" id="NF001937">
    <property type="entry name" value="PRK00714.1-4"/>
    <property type="match status" value="1"/>
</dbReference>
<dbReference type="NCBIfam" id="NF001938">
    <property type="entry name" value="PRK00714.1-5"/>
    <property type="match status" value="1"/>
</dbReference>
<dbReference type="PANTHER" id="PTHR43046">
    <property type="entry name" value="GDP-MANNOSE MANNOSYL HYDROLASE"/>
    <property type="match status" value="1"/>
</dbReference>
<dbReference type="PANTHER" id="PTHR43046:SF14">
    <property type="entry name" value="MUTT_NUDIX FAMILY PROTEIN"/>
    <property type="match status" value="1"/>
</dbReference>
<dbReference type="Pfam" id="PF00293">
    <property type="entry name" value="NUDIX"/>
    <property type="match status" value="1"/>
</dbReference>
<dbReference type="PRINTS" id="PR00502">
    <property type="entry name" value="NUDIXFAMILY"/>
</dbReference>
<dbReference type="SUPFAM" id="SSF55811">
    <property type="entry name" value="Nudix"/>
    <property type="match status" value="1"/>
</dbReference>
<dbReference type="PROSITE" id="PS51462">
    <property type="entry name" value="NUDIX"/>
    <property type="match status" value="1"/>
</dbReference>
<dbReference type="PROSITE" id="PS00893">
    <property type="entry name" value="NUDIX_BOX"/>
    <property type="match status" value="1"/>
</dbReference>
<accession>Q5X115</accession>
<comment type="function">
    <text evidence="1">Accelerates the degradation of transcripts by removing pyrophosphate from the 5'-end of triphosphorylated RNA, leading to a more labile monophosphorylated state that can stimulate subsequent ribonuclease cleavage.</text>
</comment>
<comment type="cofactor">
    <cofactor evidence="1">
        <name>a divalent metal cation</name>
        <dbReference type="ChEBI" id="CHEBI:60240"/>
    </cofactor>
</comment>
<comment type="similarity">
    <text evidence="1">Belongs to the Nudix hydrolase family. RppH subfamily.</text>
</comment>
<proteinExistence type="inferred from homology"/>
<keyword id="KW-0378">Hydrolase</keyword>
<reference key="1">
    <citation type="journal article" date="2004" name="Nat. Genet.">
        <title>Evidence in the Legionella pneumophila genome for exploitation of host cell functions and high genome plasticity.</title>
        <authorList>
            <person name="Cazalet C."/>
            <person name="Rusniok C."/>
            <person name="Brueggemann H."/>
            <person name="Zidane N."/>
            <person name="Magnier A."/>
            <person name="Ma L."/>
            <person name="Tichit M."/>
            <person name="Jarraud S."/>
            <person name="Bouchier C."/>
            <person name="Vandenesch F."/>
            <person name="Kunst F."/>
            <person name="Etienne J."/>
            <person name="Glaser P."/>
            <person name="Buchrieser C."/>
        </authorList>
    </citation>
    <scope>NUCLEOTIDE SEQUENCE [LARGE SCALE GENOMIC DNA]</scope>
    <source>
        <strain>Paris</strain>
    </source>
</reference>
<feature type="chain" id="PRO_0000231913" description="RNA pyrophosphohydrolase">
    <location>
        <begin position="1"/>
        <end position="175"/>
    </location>
</feature>
<feature type="domain" description="Nudix hydrolase" evidence="1">
    <location>
        <begin position="7"/>
        <end position="150"/>
    </location>
</feature>
<feature type="short sequence motif" description="Nudix box">
    <location>
        <begin position="39"/>
        <end position="60"/>
    </location>
</feature>
<protein>
    <recommendedName>
        <fullName evidence="1">RNA pyrophosphohydrolase</fullName>
        <ecNumber evidence="1">3.6.1.-</ecNumber>
    </recommendedName>
    <alternativeName>
        <fullName evidence="1">(Di)nucleoside polyphosphate hydrolase</fullName>
    </alternativeName>
</protein>
<name>RPPH_LEGPA</name>
<sequence length="175" mass="20709">MVIDRAGYRLNVGIILVNDSDRVFWGRRSGHDAWQFPQGGLAPGETAMQAMYRELHEEVGLDKGDVEILGSTRRWLKYRLPKQYLRHGSEPLVIGQKQKWYLLKLVTSEQKVRLDLSDSPEFDSWRWVDFHEPEQQVIFFKRQVYIQALKELEPLLKKERRTPYGLKRKRGNQRA</sequence>
<organism>
    <name type="scientific">Legionella pneumophila (strain Paris)</name>
    <dbReference type="NCBI Taxonomy" id="297246"/>
    <lineage>
        <taxon>Bacteria</taxon>
        <taxon>Pseudomonadati</taxon>
        <taxon>Pseudomonadota</taxon>
        <taxon>Gammaproteobacteria</taxon>
        <taxon>Legionellales</taxon>
        <taxon>Legionellaceae</taxon>
        <taxon>Legionella</taxon>
    </lineage>
</organism>